<protein>
    <recommendedName>
        <fullName evidence="1">Glycerol-3-phosphate acyltransferase</fullName>
    </recommendedName>
    <alternativeName>
        <fullName evidence="1">G3P acyltransferase</fullName>
        <shortName evidence="1">GPAT</shortName>
        <ecNumber evidence="1">2.3.1.15</ecNumber>
        <ecNumber evidence="1">2.3.1.n5</ecNumber>
    </alternativeName>
    <alternativeName>
        <fullName evidence="1">Lysophosphatidic acid synthase</fullName>
        <shortName evidence="1">LPA synthase</shortName>
    </alternativeName>
</protein>
<dbReference type="EC" id="2.3.1.15" evidence="1"/>
<dbReference type="EC" id="2.3.1.n5" evidence="1"/>
<dbReference type="EMBL" id="CP000247">
    <property type="protein sequence ID" value="ABG71132.1"/>
    <property type="molecule type" value="Genomic_DNA"/>
</dbReference>
<dbReference type="RefSeq" id="WP_001272796.1">
    <property type="nucleotide sequence ID" value="NC_008253.1"/>
</dbReference>
<dbReference type="SMR" id="Q0TD47"/>
<dbReference type="GeneID" id="93778934"/>
<dbReference type="KEGG" id="ecp:ECP_3149"/>
<dbReference type="HOGENOM" id="CLU_081254_0_2_6"/>
<dbReference type="UniPathway" id="UPA00085"/>
<dbReference type="Proteomes" id="UP000009182">
    <property type="component" value="Chromosome"/>
</dbReference>
<dbReference type="GO" id="GO:0005886">
    <property type="term" value="C:plasma membrane"/>
    <property type="evidence" value="ECO:0007669"/>
    <property type="project" value="UniProtKB-SubCell"/>
</dbReference>
<dbReference type="GO" id="GO:0043772">
    <property type="term" value="F:acyl-phosphate glycerol-3-phosphate acyltransferase activity"/>
    <property type="evidence" value="ECO:0007669"/>
    <property type="project" value="InterPro"/>
</dbReference>
<dbReference type="GO" id="GO:0004366">
    <property type="term" value="F:glycerol-3-phosphate O-acyltransferase activity"/>
    <property type="evidence" value="ECO:0007669"/>
    <property type="project" value="UniProtKB-UniRule"/>
</dbReference>
<dbReference type="GO" id="GO:0008654">
    <property type="term" value="P:phospholipid biosynthetic process"/>
    <property type="evidence" value="ECO:0007669"/>
    <property type="project" value="UniProtKB-UniRule"/>
</dbReference>
<dbReference type="HAMAP" id="MF_01043">
    <property type="entry name" value="PlsY"/>
    <property type="match status" value="1"/>
</dbReference>
<dbReference type="InterPro" id="IPR003811">
    <property type="entry name" value="G3P_acylTferase_PlsY"/>
</dbReference>
<dbReference type="NCBIfam" id="TIGR00023">
    <property type="entry name" value="glycerol-3-phosphate 1-O-acyltransferase PlsY"/>
    <property type="match status" value="1"/>
</dbReference>
<dbReference type="PANTHER" id="PTHR30309:SF0">
    <property type="entry name" value="GLYCEROL-3-PHOSPHATE ACYLTRANSFERASE-RELATED"/>
    <property type="match status" value="1"/>
</dbReference>
<dbReference type="PANTHER" id="PTHR30309">
    <property type="entry name" value="INNER MEMBRANE PROTEIN YGIH"/>
    <property type="match status" value="1"/>
</dbReference>
<dbReference type="Pfam" id="PF02660">
    <property type="entry name" value="G3P_acyltransf"/>
    <property type="match status" value="1"/>
</dbReference>
<dbReference type="SMART" id="SM01207">
    <property type="entry name" value="G3P_acyltransf"/>
    <property type="match status" value="1"/>
</dbReference>
<name>PLSY_ECOL5</name>
<reference key="1">
    <citation type="journal article" date="2006" name="Mol. Microbiol.">
        <title>Role of pathogenicity island-associated integrases in the genome plasticity of uropathogenic Escherichia coli strain 536.</title>
        <authorList>
            <person name="Hochhut B."/>
            <person name="Wilde C."/>
            <person name="Balling G."/>
            <person name="Middendorf B."/>
            <person name="Dobrindt U."/>
            <person name="Brzuszkiewicz E."/>
            <person name="Gottschalk G."/>
            <person name="Carniel E."/>
            <person name="Hacker J."/>
        </authorList>
    </citation>
    <scope>NUCLEOTIDE SEQUENCE [LARGE SCALE GENOMIC DNA]</scope>
    <source>
        <strain>536 / UPEC</strain>
    </source>
</reference>
<comment type="function">
    <text evidence="1">Catalyzes the transfer of an acyl group from acyl-ACP to glycerol-3-phosphate (G3P) to form lysophosphatidic acid (LPA). This enzyme can also utilize acyl-CoA as fatty acyl donor, but not acyl-PO(4).</text>
</comment>
<comment type="catalytic activity">
    <reaction evidence="1">
        <text>sn-glycerol 3-phosphate + an acyl-CoA = a 1-acyl-sn-glycero-3-phosphate + CoA</text>
        <dbReference type="Rhea" id="RHEA:15325"/>
        <dbReference type="ChEBI" id="CHEBI:57287"/>
        <dbReference type="ChEBI" id="CHEBI:57597"/>
        <dbReference type="ChEBI" id="CHEBI:57970"/>
        <dbReference type="ChEBI" id="CHEBI:58342"/>
        <dbReference type="EC" id="2.3.1.15"/>
    </reaction>
</comment>
<comment type="catalytic activity">
    <reaction evidence="1">
        <text>a fatty acyl-[ACP] + sn-glycerol 3-phosphate = a 1-acyl-sn-glycero-3-phosphate + holo-[ACP]</text>
        <dbReference type="Rhea" id="RHEA:42300"/>
        <dbReference type="Rhea" id="RHEA-COMP:9685"/>
        <dbReference type="Rhea" id="RHEA-COMP:14125"/>
        <dbReference type="ChEBI" id="CHEBI:57597"/>
        <dbReference type="ChEBI" id="CHEBI:57970"/>
        <dbReference type="ChEBI" id="CHEBI:64479"/>
        <dbReference type="ChEBI" id="CHEBI:138651"/>
        <dbReference type="EC" id="2.3.1.n5"/>
    </reaction>
</comment>
<comment type="pathway">
    <text evidence="1">Lipid metabolism; phospholipid metabolism.</text>
</comment>
<comment type="subunit">
    <text evidence="1">Probably interacts with PlsX.</text>
</comment>
<comment type="subcellular location">
    <subcellularLocation>
        <location evidence="1">Cell inner membrane</location>
        <topology evidence="1">Multi-pass membrane protein</topology>
    </subcellularLocation>
</comment>
<comment type="similarity">
    <text evidence="1">Belongs to the PlsY family.</text>
</comment>
<organism>
    <name type="scientific">Escherichia coli O6:K15:H31 (strain 536 / UPEC)</name>
    <dbReference type="NCBI Taxonomy" id="362663"/>
    <lineage>
        <taxon>Bacteria</taxon>
        <taxon>Pseudomonadati</taxon>
        <taxon>Pseudomonadota</taxon>
        <taxon>Gammaproteobacteria</taxon>
        <taxon>Enterobacterales</taxon>
        <taxon>Enterobacteriaceae</taxon>
        <taxon>Escherichia</taxon>
    </lineage>
</organism>
<feature type="chain" id="PRO_1000064172" description="Glycerol-3-phosphate acyltransferase">
    <location>
        <begin position="1"/>
        <end position="205"/>
    </location>
</feature>
<feature type="topological domain" description="Periplasmic" evidence="1">
    <location>
        <begin position="1"/>
        <end position="3"/>
    </location>
</feature>
<feature type="transmembrane region" description="Helical" evidence="1">
    <location>
        <begin position="4"/>
        <end position="24"/>
    </location>
</feature>
<feature type="topological domain" description="Cytoplasmic" evidence="1">
    <location>
        <begin position="25"/>
        <end position="52"/>
    </location>
</feature>
<feature type="transmembrane region" description="Helical" evidence="1">
    <location>
        <begin position="53"/>
        <end position="73"/>
    </location>
</feature>
<feature type="topological domain" description="Periplasmic" evidence="1">
    <location>
        <begin position="74"/>
        <end position="80"/>
    </location>
</feature>
<feature type="transmembrane region" description="Helical" evidence="1">
    <location>
        <begin position="81"/>
        <end position="101"/>
    </location>
</feature>
<feature type="topological domain" description="Cytoplasmic" evidence="1">
    <location>
        <begin position="102"/>
        <end position="111"/>
    </location>
</feature>
<feature type="transmembrane region" description="Helical" evidence="1">
    <location>
        <begin position="112"/>
        <end position="132"/>
    </location>
</feature>
<feature type="topological domain" description="Periplasmic" evidence="1">
    <location>
        <begin position="133"/>
        <end position="137"/>
    </location>
</feature>
<feature type="transmembrane region" description="Helical" evidence="1">
    <location>
        <begin position="138"/>
        <end position="158"/>
    </location>
</feature>
<feature type="topological domain" description="Cytoplasmic" evidence="1">
    <location>
        <begin position="159"/>
        <end position="205"/>
    </location>
</feature>
<evidence type="ECO:0000255" key="1">
    <source>
        <dbReference type="HAMAP-Rule" id="MF_01043"/>
    </source>
</evidence>
<keyword id="KW-0997">Cell inner membrane</keyword>
<keyword id="KW-1003">Cell membrane</keyword>
<keyword id="KW-0444">Lipid biosynthesis</keyword>
<keyword id="KW-0443">Lipid metabolism</keyword>
<keyword id="KW-0472">Membrane</keyword>
<keyword id="KW-0594">Phospholipid biosynthesis</keyword>
<keyword id="KW-1208">Phospholipid metabolism</keyword>
<keyword id="KW-0808">Transferase</keyword>
<keyword id="KW-0812">Transmembrane</keyword>
<keyword id="KW-1133">Transmembrane helix</keyword>
<sequence length="205" mass="22193">MSAIAPGMILIAYLCGSISSAILVCRLCGLPDPRTSGSGNPGATNVLRIGGKGAAVAVLIFDVLKGMLPVWGAYELGVSPFWLGLIAIAACLGHIWPVFFGFKGGKGVATAFGAIAPIGWDLTGVMAGTWLLTVLLSGYSSLGAIVSALIAPFYVWWFKPQFTFPVSMLSCLILLRHHDNIQRLWRRQETKIWTKFKRKREKDPE</sequence>
<accession>Q0TD47</accession>
<gene>
    <name evidence="1" type="primary">plsY</name>
    <name type="synonym">ygiH</name>
    <name type="ordered locus">ECP_3149</name>
</gene>
<proteinExistence type="inferred from homology"/>